<comment type="function">
    <text evidence="1">Structural protein that makes short spikes at the surface of the virus. Contains receptor binding and receptor-destroying activities. Mediates de-O-acetylation of N-acetyl-4-O-acetylneuraminic acid, which is probably the receptor determinant recognized by the virus on the surface of erythrocytes and susceptible cells. This receptor-destroying activity is important for virus release as it probably helps preventing self-aggregation and ensures the efficient spread of the progeny virus from cell to cell. May serve as a secondary viral attachment protein for initiating infection, the spike protein being the major one. May become a target for both the humoral and the cellular branches of the immune system.</text>
</comment>
<comment type="catalytic activity">
    <reaction evidence="1">
        <text>N-acetyl-9-O-acetylneuraminate + H2O = N-acetylneuraminate + acetate + H(+)</text>
        <dbReference type="Rhea" id="RHEA:22600"/>
        <dbReference type="ChEBI" id="CHEBI:15377"/>
        <dbReference type="ChEBI" id="CHEBI:15378"/>
        <dbReference type="ChEBI" id="CHEBI:28999"/>
        <dbReference type="ChEBI" id="CHEBI:30089"/>
        <dbReference type="ChEBI" id="CHEBI:35418"/>
        <dbReference type="EC" id="3.1.1.53"/>
    </reaction>
</comment>
<comment type="catalytic activity">
    <reaction evidence="1">
        <text>N-acetyl-4-O-acetylneuraminate + H2O = N-acetylneuraminate + acetate + H(+)</text>
        <dbReference type="Rhea" id="RHEA:25564"/>
        <dbReference type="ChEBI" id="CHEBI:15377"/>
        <dbReference type="ChEBI" id="CHEBI:15378"/>
        <dbReference type="ChEBI" id="CHEBI:29006"/>
        <dbReference type="ChEBI" id="CHEBI:30089"/>
        <dbReference type="ChEBI" id="CHEBI:35418"/>
        <dbReference type="EC" id="3.1.1.53"/>
    </reaction>
</comment>
<comment type="subunit">
    <text evidence="1">Homodimer; disulfide-linked. Forms a complex with the M protein in the pre-Golgi. Associates then with S-M complex to form a ternary complex S-M-HE.</text>
</comment>
<comment type="subcellular location">
    <subcellularLocation>
        <location evidence="1">Virion membrane</location>
        <topology evidence="1">Single-pass type I membrane protein</topology>
    </subcellularLocation>
    <subcellularLocation>
        <location evidence="1">Host cell membrane</location>
        <topology evidence="1">Single-pass type I membrane protein</topology>
    </subcellularLocation>
    <text evidence="1">In infected cells becomes incorporated into the envelope of virions during virus assembly at the endoplasmic reticulum and cis Golgi. However, some may escape incorporation into virions and subsequently migrate to the cell surface.</text>
</comment>
<comment type="PTM">
    <text evidence="1">N-glycosylated in the host RER.</text>
</comment>
<comment type="similarity">
    <text evidence="1">Belongs to the influenza type C/coronaviruses hemagglutinin-esterase family.</text>
</comment>
<comment type="sequence caution">
    <conflict type="erroneous initiation">
        <sequence resource="EMBL-CDS" id="AAA73152"/>
    </conflict>
    <text>Extended N-terminus.</text>
</comment>
<organism>
    <name type="scientific">Bovine coronavirus (strain G95)</name>
    <name type="common">BCoV</name>
    <name type="synonym">BCV</name>
    <dbReference type="NCBI Taxonomy" id="230235"/>
    <lineage>
        <taxon>Viruses</taxon>
        <taxon>Riboviria</taxon>
        <taxon>Orthornavirae</taxon>
        <taxon>Pisuviricota</taxon>
        <taxon>Pisoniviricetes</taxon>
        <taxon>Nidovirales</taxon>
        <taxon>Cornidovirineae</taxon>
        <taxon>Coronaviridae</taxon>
        <taxon>Orthocoronavirinae</taxon>
        <taxon>Betacoronavirus</taxon>
        <taxon>Embecovirus</taxon>
        <taxon>Betacoronavirus 1</taxon>
    </lineage>
</organism>
<proteinExistence type="evidence at transcript level"/>
<organismHost>
    <name type="scientific">Bos taurus</name>
    <name type="common">Bovine</name>
    <dbReference type="NCBI Taxonomy" id="9913"/>
</organismHost>
<keyword id="KW-1015">Disulfide bond</keyword>
<keyword id="KW-0325">Glycoprotein</keyword>
<keyword id="KW-0348">Hemagglutinin</keyword>
<keyword id="KW-1032">Host cell membrane</keyword>
<keyword id="KW-1043">Host membrane</keyword>
<keyword id="KW-0378">Hydrolase</keyword>
<keyword id="KW-0472">Membrane</keyword>
<keyword id="KW-0732">Signal</keyword>
<keyword id="KW-0812">Transmembrane</keyword>
<keyword id="KW-1133">Transmembrane helix</keyword>
<keyword id="KW-0261">Viral envelope protein</keyword>
<keyword id="KW-0946">Virion</keyword>
<accession>Q66165</accession>
<gene>
    <name evidence="1" type="primary">HE</name>
    <name type="ORF">2b</name>
</gene>
<dbReference type="EC" id="3.1.1.53" evidence="1"/>
<dbReference type="EMBL" id="M80842">
    <property type="protein sequence ID" value="AAA73152.1"/>
    <property type="status" value="ALT_INIT"/>
    <property type="molecule type" value="mRNA"/>
</dbReference>
<dbReference type="SMR" id="Q66165"/>
<dbReference type="GlyCosmos" id="Q66165">
    <property type="glycosylation" value="8 sites, No reported glycans"/>
</dbReference>
<dbReference type="GO" id="GO:0020002">
    <property type="term" value="C:host cell plasma membrane"/>
    <property type="evidence" value="ECO:0007669"/>
    <property type="project" value="UniProtKB-SubCell"/>
</dbReference>
<dbReference type="GO" id="GO:0016020">
    <property type="term" value="C:membrane"/>
    <property type="evidence" value="ECO:0007669"/>
    <property type="project" value="UniProtKB-UniRule"/>
</dbReference>
<dbReference type="GO" id="GO:0019031">
    <property type="term" value="C:viral envelope"/>
    <property type="evidence" value="ECO:0007669"/>
    <property type="project" value="UniProtKB-UniRule"/>
</dbReference>
<dbReference type="GO" id="GO:0055036">
    <property type="term" value="C:virion membrane"/>
    <property type="evidence" value="ECO:0007669"/>
    <property type="project" value="UniProtKB-SubCell"/>
</dbReference>
<dbReference type="GO" id="GO:0046789">
    <property type="term" value="F:host cell surface receptor binding"/>
    <property type="evidence" value="ECO:0007669"/>
    <property type="project" value="UniProtKB-UniRule"/>
</dbReference>
<dbReference type="GO" id="GO:0106331">
    <property type="term" value="F:sialate 4-O-acetylesterase activity"/>
    <property type="evidence" value="ECO:0007669"/>
    <property type="project" value="RHEA"/>
</dbReference>
<dbReference type="GO" id="GO:0106330">
    <property type="term" value="F:sialate 9-O-acetylesterase activity"/>
    <property type="evidence" value="ECO:0007669"/>
    <property type="project" value="RHEA"/>
</dbReference>
<dbReference type="GO" id="GO:0001681">
    <property type="term" value="F:sialate O-acetylesterase activity"/>
    <property type="evidence" value="ECO:0000250"/>
    <property type="project" value="UniProtKB"/>
</dbReference>
<dbReference type="GO" id="GO:0019064">
    <property type="term" value="P:fusion of virus membrane with host plasma membrane"/>
    <property type="evidence" value="ECO:0007669"/>
    <property type="project" value="UniProtKB-UniRule"/>
</dbReference>
<dbReference type="HAMAP" id="MF_04207">
    <property type="entry name" value="BETA_CORONA_HE"/>
    <property type="match status" value="1"/>
</dbReference>
<dbReference type="InterPro" id="IPR008980">
    <property type="entry name" value="Capsid_hemagglutn"/>
</dbReference>
<dbReference type="InterPro" id="IPR042545">
    <property type="entry name" value="HEMA"/>
</dbReference>
<dbReference type="InterPro" id="IPR007142">
    <property type="entry name" value="Hemagglutn-estrase_core"/>
</dbReference>
<dbReference type="InterPro" id="IPR003860">
    <property type="entry name" value="Hemagglutn-estrase_hemagglutn"/>
</dbReference>
<dbReference type="Pfam" id="PF03996">
    <property type="entry name" value="Hema_esterase"/>
    <property type="match status" value="1"/>
</dbReference>
<dbReference type="Pfam" id="PF02710">
    <property type="entry name" value="Hema_HEFG"/>
    <property type="match status" value="1"/>
</dbReference>
<dbReference type="SUPFAM" id="SSF52266">
    <property type="entry name" value="SGNH hydrolase"/>
    <property type="match status" value="1"/>
</dbReference>
<dbReference type="SUPFAM" id="SSF49818">
    <property type="entry name" value="Viral protein domain"/>
    <property type="match status" value="1"/>
</dbReference>
<evidence type="ECO:0000255" key="1">
    <source>
        <dbReference type="HAMAP-Rule" id="MF_04207"/>
    </source>
</evidence>
<name>HEMA_CVBG9</name>
<reference key="1">
    <citation type="journal article" date="1992" name="Virology">
        <title>The hemagglutinin/esterase gene of human coronavirus strain OC43: phylogenetic relationships to bovine and murine coronaviruses and influenza C virus.</title>
        <authorList>
            <person name="Zhang X.M."/>
            <person name="Kousoulas K.G."/>
            <person name="Storz J."/>
        </authorList>
    </citation>
    <scope>NUCLEOTIDE SEQUENCE [MRNA]</scope>
</reference>
<protein>
    <recommendedName>
        <fullName evidence="1">Hemagglutinin-esterase</fullName>
        <shortName evidence="1">HE protein</shortName>
        <ecNumber evidence="1">3.1.1.53</ecNumber>
    </recommendedName>
    <alternativeName>
        <fullName evidence="1">E3 glycoprotein</fullName>
    </alternativeName>
</protein>
<feature type="signal peptide" evidence="1">
    <location>
        <begin position="1"/>
        <end position="16"/>
    </location>
</feature>
<feature type="chain" id="PRO_0000037135" description="Hemagglutinin-esterase" evidence="1">
    <location>
        <begin position="17"/>
        <end position="424"/>
    </location>
</feature>
<feature type="topological domain" description="Virion surface" evidence="1">
    <location>
        <begin position="17"/>
        <end position="392"/>
    </location>
</feature>
<feature type="transmembrane region" description="Helical" evidence="1">
    <location>
        <begin position="393"/>
        <end position="413"/>
    </location>
</feature>
<feature type="topological domain" description="Intravirion" evidence="1">
    <location>
        <begin position="414"/>
        <end position="424"/>
    </location>
</feature>
<feature type="region of interest" description="Esterase domain 1" evidence="1">
    <location>
        <begin position="7"/>
        <end position="127"/>
    </location>
</feature>
<feature type="region of interest" description="Receptor binding" evidence="1">
    <location>
        <begin position="128"/>
        <end position="266"/>
    </location>
</feature>
<feature type="region of interest" description="Esterase domain 2" evidence="1">
    <location>
        <begin position="267"/>
        <end position="379"/>
    </location>
</feature>
<feature type="active site" description="Nucleophile" evidence="1">
    <location>
        <position position="40"/>
    </location>
</feature>
<feature type="active site" description="Charge relay system" evidence="1">
    <location>
        <position position="326"/>
    </location>
</feature>
<feature type="active site" description="Charge relay system" evidence="1">
    <location>
        <position position="329"/>
    </location>
</feature>
<feature type="glycosylation site" description="N-linked (GlcNAc...) asparagine; by host" evidence="1">
    <location>
        <position position="54"/>
    </location>
</feature>
<feature type="glycosylation site" description="N-linked (GlcNAc...) asparagine; by host" evidence="1">
    <location>
        <position position="89"/>
    </location>
</feature>
<feature type="glycosylation site" description="N-linked (GlcNAc...) asparagine; by host" evidence="1">
    <location>
        <position position="153"/>
    </location>
</feature>
<feature type="glycosylation site" description="N-linked (GlcNAc...) asparagine; by host" evidence="1">
    <location>
        <position position="236"/>
    </location>
</feature>
<feature type="glycosylation site" description="N-linked (GlcNAc...) asparagine; by host" evidence="1">
    <location>
        <position position="301"/>
    </location>
</feature>
<feature type="glycosylation site" description="N-linked (GlcNAc...) asparagine; by host" evidence="1">
    <location>
        <position position="316"/>
    </location>
</feature>
<feature type="glycosylation site" description="N-linked (GlcNAc...) asparagine; by host" evidence="1">
    <location>
        <position position="358"/>
    </location>
</feature>
<feature type="glycosylation site" description="N-linked (GlcNAc...) asparagine; by host" evidence="1">
    <location>
        <position position="417"/>
    </location>
</feature>
<feature type="disulfide bond" evidence="1">
    <location>
        <begin position="44"/>
        <end position="65"/>
    </location>
</feature>
<feature type="disulfide bond" evidence="1">
    <location>
        <begin position="113"/>
        <end position="162"/>
    </location>
</feature>
<feature type="disulfide bond" evidence="1">
    <location>
        <begin position="197"/>
        <end position="276"/>
    </location>
</feature>
<feature type="disulfide bond" evidence="1">
    <location>
        <begin position="205"/>
        <end position="249"/>
    </location>
</feature>
<feature type="disulfide bond" evidence="1">
    <location>
        <begin position="307"/>
        <end position="312"/>
    </location>
</feature>
<feature type="disulfide bond" evidence="1">
    <location>
        <begin position="347"/>
        <end position="371"/>
    </location>
</feature>
<sequence length="424" mass="47702">MFLLPRFVLVSCIIGSLGFENPPTNVVSHLNGDWFLFGDSRSDCNHVVNTNPRNYSYMDLNPALCDSGKISSKAGNSIFRSFHFTDFYNYTGEGQQIIFYEGVNFTPYHAFKCTTSGSNDIWMQNKGLFYTQVYKNMAVYRSLTFVNVPYVYNGSAQSTALCKSGSLVLNNPAYIAREANFGDYYYKVEADFYLSGCDEYIVPLCIFNGKFLSNTKYYDDSQYYFNKDTGVIYGLNSTETITTGFDFNCHYLVLPSGNYLAISNELLLTVPTKAICLNKRKDFTPVQVVDSRWNNARQSDNMTAVACQPPYCYFRNSTTNYVGVYDINHGDAGFTSILSGLLYDSPCFSQQGVFRYNNVSSVWPLYPYGRCPTAADINTPDVPICVYDPLPLILLGILLGVAVIIIVVLLLYFMVDNGTRLHDA</sequence>